<evidence type="ECO:0000255" key="1">
    <source>
        <dbReference type="HAMAP-Rule" id="MF_03110"/>
    </source>
</evidence>
<evidence type="ECO:0000256" key="2">
    <source>
        <dbReference type="SAM" id="MobiDB-lite"/>
    </source>
</evidence>
<sequence>MATEYGDDDGGLYFHSTQMQSIHESLQQEENQRLYLQTSIKKLESFKHVNNDSSNNSNSGAVSVVQIKKKAATKKRKLMARKPNVKKPKSSSEAVRQAFEKDKFAYFTNNQAKIDDFLPGKSTSTEPSTSNQGSLISSDEWNYIKQIYLQKPTKNKTTLKSIRKRIKQYENSGTGMWEIAALNVDVSLNDEDIQHLYALDEEQMVSDDNSSTEDDTDPTQNDGLILTLSQNCSTQRDICHHEKDDQKYILIDSSICETYQQDKSLQRHSQKDSDNGNTIPDQNSAITIGEMESTAAHEVEEIFSTPSYVPSNKLNADQDRSDESESSIIMLADNIVSTQPDIVESISDSESEIEIIERPRLQVLRSVYENGTSTNQTRQELTMPKCLENNKISENEEYESEVVESDSTPIITPVVTPTKKPHIFPTNEPAIPIALRSTPNKIKNNVDRIFGSPSPIKLVLESPLKKHINIEFSDSESIYSTAVSQFGTPKQTTSFSPEVLTQKVGSPPLDACSDSGPTGVVSSMPYKKPHSTKRLRTTTLEISAALRVKNYTDPKNNITVKKFGEEIKREFIDLDNEIPDSESSDDDTGFSIIEITRQVEECKEPANDDYSEEQSTDLFQIGLKNKQETGNTSHMQVPSSPELQFENAGNTFLNSSLVEEDEFTKLKATELRERFKDWGLKPVQRKDKMLEILQGISDFISPESLLALKGFDLQQCVFDKLELLIKQDQFWYDRILTFEPIRLEELKQWLNSHNHHLELDILRLYCDRNCITTTNT</sequence>
<accession>Q5AFV3</accession>
<accession>A0A1D8PLM6</accession>
<accession>Q5AF67</accession>
<accession>Q5AF68</accession>
<organism>
    <name type="scientific">Candida albicans (strain SC5314 / ATCC MYA-2876)</name>
    <name type="common">Yeast</name>
    <dbReference type="NCBI Taxonomy" id="237561"/>
    <lineage>
        <taxon>Eukaryota</taxon>
        <taxon>Fungi</taxon>
        <taxon>Dikarya</taxon>
        <taxon>Ascomycota</taxon>
        <taxon>Saccharomycotina</taxon>
        <taxon>Pichiomycetes</taxon>
        <taxon>Debaryomycetaceae</taxon>
        <taxon>Candida/Lodderomyces clade</taxon>
        <taxon>Candida</taxon>
    </lineage>
</organism>
<comment type="function">
    <text evidence="1">Regulatory subunit of the SLX1-SLX4 structure-specific endonuclease that resolves DNA secondary structures generated during DNA repair and recombination. Has endonuclease activity towards branched DNA substrates, introducing single-strand cuts in duplex DNA close to junctions with ss-DNA.</text>
</comment>
<comment type="subunit">
    <text evidence="1">Forms a heterodimer with SLX1.</text>
</comment>
<comment type="subcellular location">
    <subcellularLocation>
        <location evidence="1">Nucleus</location>
    </subcellularLocation>
</comment>
<comment type="PTM">
    <text evidence="1">Phosphorylated in response to DNA damage.</text>
</comment>
<comment type="similarity">
    <text evidence="1">Belongs to the SLX4 family.</text>
</comment>
<proteinExistence type="inferred from homology"/>
<dbReference type="EMBL" id="CP017626">
    <property type="protein sequence ID" value="AOW29028.1"/>
    <property type="molecule type" value="Genomic_DNA"/>
</dbReference>
<dbReference type="RefSeq" id="XP_720490.2">
    <property type="nucleotide sequence ID" value="XM_715397.2"/>
</dbReference>
<dbReference type="SMR" id="Q5AFV3"/>
<dbReference type="BioGRID" id="1221007">
    <property type="interactions" value="1"/>
</dbReference>
<dbReference type="FunCoup" id="Q5AFV3">
    <property type="interactions" value="39"/>
</dbReference>
<dbReference type="EnsemblFungi" id="C4_02590C_A-T">
    <property type="protein sequence ID" value="C4_02590C_A-T-p1"/>
    <property type="gene ID" value="C4_02590C_A"/>
</dbReference>
<dbReference type="GeneID" id="3637913"/>
<dbReference type="KEGG" id="cal:CAALFM_C402590CA"/>
<dbReference type="CGD" id="CAL0000175447">
    <property type="gene designation" value="SLX4"/>
</dbReference>
<dbReference type="VEuPathDB" id="FungiDB:C4_02590C_A"/>
<dbReference type="eggNOG" id="ENOG502RS18">
    <property type="taxonomic scope" value="Eukaryota"/>
</dbReference>
<dbReference type="HOGENOM" id="CLU_429039_0_0_1"/>
<dbReference type="InParanoid" id="Q5AFV3"/>
<dbReference type="OrthoDB" id="5349119at2759"/>
<dbReference type="PRO" id="PR:Q5AFV3"/>
<dbReference type="Proteomes" id="UP000000559">
    <property type="component" value="Chromosome 4"/>
</dbReference>
<dbReference type="GO" id="GO:0033557">
    <property type="term" value="C:Slx1-Slx4 complex"/>
    <property type="evidence" value="ECO:0007669"/>
    <property type="project" value="UniProtKB-UniRule"/>
</dbReference>
<dbReference type="GO" id="GO:0017108">
    <property type="term" value="F:5'-flap endonuclease activity"/>
    <property type="evidence" value="ECO:0007669"/>
    <property type="project" value="InterPro"/>
</dbReference>
<dbReference type="GO" id="GO:0006310">
    <property type="term" value="P:DNA recombination"/>
    <property type="evidence" value="ECO:0007669"/>
    <property type="project" value="UniProtKB-UniRule"/>
</dbReference>
<dbReference type="GO" id="GO:0006281">
    <property type="term" value="P:DNA repair"/>
    <property type="evidence" value="ECO:0007669"/>
    <property type="project" value="UniProtKB-UniRule"/>
</dbReference>
<dbReference type="GO" id="GO:0006260">
    <property type="term" value="P:DNA replication"/>
    <property type="evidence" value="ECO:0007669"/>
    <property type="project" value="InterPro"/>
</dbReference>
<dbReference type="HAMAP" id="MF_03110">
    <property type="entry name" value="Endonuc_su_Slx4"/>
    <property type="match status" value="1"/>
</dbReference>
<dbReference type="InterPro" id="IPR027784">
    <property type="entry name" value="Slx4_ascomycetes"/>
</dbReference>
<dbReference type="InterPro" id="IPR018574">
    <property type="entry name" value="Structure-sp_endonuc_su_Slx4"/>
</dbReference>
<dbReference type="Pfam" id="PF09494">
    <property type="entry name" value="Slx4"/>
    <property type="match status" value="1"/>
</dbReference>
<name>SLX4_CANAL</name>
<feature type="chain" id="PRO_0000388020" description="Structure-specific endonuclease subunit SLX4">
    <location>
        <begin position="1"/>
        <end position="776"/>
    </location>
</feature>
<feature type="region of interest" description="Disordered" evidence="2">
    <location>
        <begin position="201"/>
        <end position="223"/>
    </location>
</feature>
<feature type="region of interest" description="Disordered" evidence="2">
    <location>
        <begin position="263"/>
        <end position="283"/>
    </location>
</feature>
<feature type="region of interest" description="Disordered" evidence="2">
    <location>
        <begin position="507"/>
        <end position="531"/>
    </location>
</feature>
<feature type="compositionally biased region" description="Acidic residues" evidence="2">
    <location>
        <begin position="201"/>
        <end position="217"/>
    </location>
</feature>
<protein>
    <recommendedName>
        <fullName evidence="1">Structure-specific endonuclease subunit SLX4</fullName>
    </recommendedName>
</protein>
<keyword id="KW-0227">DNA damage</keyword>
<keyword id="KW-0233">DNA recombination</keyword>
<keyword id="KW-0234">DNA repair</keyword>
<keyword id="KW-0539">Nucleus</keyword>
<keyword id="KW-0597">Phosphoprotein</keyword>
<keyword id="KW-1185">Reference proteome</keyword>
<reference key="1">
    <citation type="journal article" date="2004" name="Proc. Natl. Acad. Sci. U.S.A.">
        <title>The diploid genome sequence of Candida albicans.</title>
        <authorList>
            <person name="Jones T."/>
            <person name="Federspiel N.A."/>
            <person name="Chibana H."/>
            <person name="Dungan J."/>
            <person name="Kalman S."/>
            <person name="Magee B.B."/>
            <person name="Newport G."/>
            <person name="Thorstenson Y.R."/>
            <person name="Agabian N."/>
            <person name="Magee P.T."/>
            <person name="Davis R.W."/>
            <person name="Scherer S."/>
        </authorList>
    </citation>
    <scope>NUCLEOTIDE SEQUENCE [LARGE SCALE GENOMIC DNA]</scope>
    <source>
        <strain>SC5314 / ATCC MYA-2876</strain>
    </source>
</reference>
<reference key="2">
    <citation type="journal article" date="2007" name="Genome Biol.">
        <title>Assembly of the Candida albicans genome into sixteen supercontigs aligned on the eight chromosomes.</title>
        <authorList>
            <person name="van het Hoog M."/>
            <person name="Rast T.J."/>
            <person name="Martchenko M."/>
            <person name="Grindle S."/>
            <person name="Dignard D."/>
            <person name="Hogues H."/>
            <person name="Cuomo C."/>
            <person name="Berriman M."/>
            <person name="Scherer S."/>
            <person name="Magee B.B."/>
            <person name="Whiteway M."/>
            <person name="Chibana H."/>
            <person name="Nantel A."/>
            <person name="Magee P.T."/>
        </authorList>
    </citation>
    <scope>GENOME REANNOTATION</scope>
    <source>
        <strain>SC5314 / ATCC MYA-2876</strain>
    </source>
</reference>
<reference key="3">
    <citation type="journal article" date="2013" name="Genome Biol.">
        <title>Assembly of a phased diploid Candida albicans genome facilitates allele-specific measurements and provides a simple model for repeat and indel structure.</title>
        <authorList>
            <person name="Muzzey D."/>
            <person name="Schwartz K."/>
            <person name="Weissman J.S."/>
            <person name="Sherlock G."/>
        </authorList>
    </citation>
    <scope>NUCLEOTIDE SEQUENCE [LARGE SCALE GENOMIC DNA]</scope>
    <scope>GENOME REANNOTATION</scope>
    <source>
        <strain>SC5314 / ATCC MYA-2876</strain>
    </source>
</reference>
<gene>
    <name evidence="1" type="primary">SLX4</name>
    <name type="ordered locus">CAALFM_C402590CA</name>
    <name type="ORF">CaO19.10255/10254</name>
    <name type="ORF">CaO19.2740</name>
</gene>